<evidence type="ECO:0000250" key="1"/>
<evidence type="ECO:0000250" key="2">
    <source>
        <dbReference type="UniProtKB" id="Q15417"/>
    </source>
</evidence>
<evidence type="ECO:0000250" key="3">
    <source>
        <dbReference type="UniProtKB" id="Q9DAW9"/>
    </source>
</evidence>
<evidence type="ECO:0000255" key="4">
    <source>
        <dbReference type="PROSITE-ProRule" id="PRU00044"/>
    </source>
</evidence>
<evidence type="ECO:0000256" key="5">
    <source>
        <dbReference type="SAM" id="MobiDB-lite"/>
    </source>
</evidence>
<evidence type="ECO:0000305" key="6"/>
<reference key="1">
    <citation type="submission" date="2005-11" db="EMBL/GenBank/DDBJ databases">
        <authorList>
            <consortium name="NIH - Mammalian Gene Collection (MGC) project"/>
        </authorList>
    </citation>
    <scope>NUCLEOTIDE SEQUENCE [LARGE SCALE MRNA]</scope>
    <source>
        <strain>Crossbred X Angus</strain>
        <tissue>Liver</tissue>
    </source>
</reference>
<feature type="chain" id="PRO_0000244392" description="Calponin-3">
    <location>
        <begin position="1"/>
        <end position="329"/>
    </location>
</feature>
<feature type="domain" description="Calponin-homology (CH)" evidence="4">
    <location>
        <begin position="26"/>
        <end position="130"/>
    </location>
</feature>
<feature type="repeat" description="Calponin-like 1">
    <location>
        <begin position="164"/>
        <end position="189"/>
    </location>
</feature>
<feature type="repeat" description="Calponin-like 2">
    <location>
        <begin position="204"/>
        <end position="229"/>
    </location>
</feature>
<feature type="repeat" description="Calponin-like 3">
    <location>
        <begin position="243"/>
        <end position="268"/>
    </location>
</feature>
<feature type="region of interest" description="Disordered" evidence="5">
    <location>
        <begin position="280"/>
        <end position="329"/>
    </location>
</feature>
<feature type="compositionally biased region" description="Basic and acidic residues" evidence="5">
    <location>
        <begin position="306"/>
        <end position="318"/>
    </location>
</feature>
<feature type="modified residue" description="N6-acetyllysine" evidence="3">
    <location>
        <position position="23"/>
    </location>
</feature>
<feature type="modified residue" description="N6-methyllysine" evidence="2">
    <location>
        <position position="158"/>
    </location>
</feature>
<dbReference type="EMBL" id="BC109697">
    <property type="protein sequence ID" value="AAI09698.1"/>
    <property type="molecule type" value="mRNA"/>
</dbReference>
<dbReference type="RefSeq" id="NP_001033268.1">
    <property type="nucleotide sequence ID" value="NM_001038179.1"/>
</dbReference>
<dbReference type="SMR" id="Q32L92"/>
<dbReference type="FunCoup" id="Q32L92">
    <property type="interactions" value="1837"/>
</dbReference>
<dbReference type="STRING" id="9913.ENSBTAP00000027115"/>
<dbReference type="PaxDb" id="9913-ENSBTAP00000027115"/>
<dbReference type="PeptideAtlas" id="Q32L92"/>
<dbReference type="Ensembl" id="ENSBTAT00000027115.4">
    <property type="protein sequence ID" value="ENSBTAP00000027115.3"/>
    <property type="gene ID" value="ENSBTAG00000020345.5"/>
</dbReference>
<dbReference type="GeneID" id="538975"/>
<dbReference type="KEGG" id="bta:538975"/>
<dbReference type="CTD" id="1266"/>
<dbReference type="VEuPathDB" id="HostDB:ENSBTAG00000020345"/>
<dbReference type="eggNOG" id="KOG2046">
    <property type="taxonomic scope" value="Eukaryota"/>
</dbReference>
<dbReference type="GeneTree" id="ENSGT00940000154539"/>
<dbReference type="HOGENOM" id="CLU_055232_0_1_1"/>
<dbReference type="InParanoid" id="Q32L92"/>
<dbReference type="OMA" id="YHSEYQD"/>
<dbReference type="OrthoDB" id="21595at2759"/>
<dbReference type="TreeFam" id="TF313921"/>
<dbReference type="Proteomes" id="UP000009136">
    <property type="component" value="Chromosome 3"/>
</dbReference>
<dbReference type="Bgee" id="ENSBTAG00000020345">
    <property type="expression patterns" value="Expressed in neurohypophysis and 104 other cell types or tissues"/>
</dbReference>
<dbReference type="GO" id="GO:0015629">
    <property type="term" value="C:actin cytoskeleton"/>
    <property type="evidence" value="ECO:0000318"/>
    <property type="project" value="GO_Central"/>
</dbReference>
<dbReference type="GO" id="GO:0051015">
    <property type="term" value="F:actin filament binding"/>
    <property type="evidence" value="ECO:0000318"/>
    <property type="project" value="GO_Central"/>
</dbReference>
<dbReference type="GO" id="GO:0005516">
    <property type="term" value="F:calmodulin binding"/>
    <property type="evidence" value="ECO:0007669"/>
    <property type="project" value="UniProtKB-KW"/>
</dbReference>
<dbReference type="GO" id="GO:0008017">
    <property type="term" value="F:microtubule binding"/>
    <property type="evidence" value="ECO:0000250"/>
    <property type="project" value="AgBase"/>
</dbReference>
<dbReference type="GO" id="GO:0007015">
    <property type="term" value="P:actin filament organization"/>
    <property type="evidence" value="ECO:0000318"/>
    <property type="project" value="GO_Central"/>
</dbReference>
<dbReference type="GO" id="GO:0031032">
    <property type="term" value="P:actomyosin structure organization"/>
    <property type="evidence" value="ECO:0007669"/>
    <property type="project" value="InterPro"/>
</dbReference>
<dbReference type="CDD" id="cd21284">
    <property type="entry name" value="CH_CNN3"/>
    <property type="match status" value="1"/>
</dbReference>
<dbReference type="FunFam" id="1.10.418.10:FF:000040">
    <property type="entry name" value="Calponin"/>
    <property type="match status" value="1"/>
</dbReference>
<dbReference type="Gene3D" id="1.10.418.10">
    <property type="entry name" value="Calponin-like domain"/>
    <property type="match status" value="1"/>
</dbReference>
<dbReference type="InterPro" id="IPR050606">
    <property type="entry name" value="Calponin-like"/>
</dbReference>
<dbReference type="InterPro" id="IPR001997">
    <property type="entry name" value="Calponin/LIMCH1"/>
</dbReference>
<dbReference type="InterPro" id="IPR000557">
    <property type="entry name" value="Calponin_repeat"/>
</dbReference>
<dbReference type="InterPro" id="IPR001715">
    <property type="entry name" value="CH_dom"/>
</dbReference>
<dbReference type="InterPro" id="IPR036872">
    <property type="entry name" value="CH_dom_sf"/>
</dbReference>
<dbReference type="InterPro" id="IPR003096">
    <property type="entry name" value="SM22_calponin"/>
</dbReference>
<dbReference type="PANTHER" id="PTHR47385">
    <property type="entry name" value="CALPONIN"/>
    <property type="match status" value="1"/>
</dbReference>
<dbReference type="PANTHER" id="PTHR47385:SF24">
    <property type="entry name" value="MUSCLE-SPECIFIC PROTEIN 20"/>
    <property type="match status" value="1"/>
</dbReference>
<dbReference type="Pfam" id="PF00402">
    <property type="entry name" value="Calponin"/>
    <property type="match status" value="3"/>
</dbReference>
<dbReference type="Pfam" id="PF00307">
    <property type="entry name" value="CH"/>
    <property type="match status" value="1"/>
</dbReference>
<dbReference type="PRINTS" id="PR00889">
    <property type="entry name" value="CALPONIN"/>
</dbReference>
<dbReference type="PRINTS" id="PR00888">
    <property type="entry name" value="SM22CALPONIN"/>
</dbReference>
<dbReference type="SMART" id="SM00033">
    <property type="entry name" value="CH"/>
    <property type="match status" value="1"/>
</dbReference>
<dbReference type="SUPFAM" id="SSF47576">
    <property type="entry name" value="Calponin-homology domain, CH-domain"/>
    <property type="match status" value="1"/>
</dbReference>
<dbReference type="PROSITE" id="PS01052">
    <property type="entry name" value="CALPONIN_1"/>
    <property type="match status" value="3"/>
</dbReference>
<dbReference type="PROSITE" id="PS51122">
    <property type="entry name" value="CALPONIN_2"/>
    <property type="match status" value="3"/>
</dbReference>
<dbReference type="PROSITE" id="PS50021">
    <property type="entry name" value="CH"/>
    <property type="match status" value="1"/>
</dbReference>
<proteinExistence type="evidence at transcript level"/>
<accession>Q32L92</accession>
<organism>
    <name type="scientific">Bos taurus</name>
    <name type="common">Bovine</name>
    <dbReference type="NCBI Taxonomy" id="9913"/>
    <lineage>
        <taxon>Eukaryota</taxon>
        <taxon>Metazoa</taxon>
        <taxon>Chordata</taxon>
        <taxon>Craniata</taxon>
        <taxon>Vertebrata</taxon>
        <taxon>Euteleostomi</taxon>
        <taxon>Mammalia</taxon>
        <taxon>Eutheria</taxon>
        <taxon>Laurasiatheria</taxon>
        <taxon>Artiodactyla</taxon>
        <taxon>Ruminantia</taxon>
        <taxon>Pecora</taxon>
        <taxon>Bovidae</taxon>
        <taxon>Bovinae</taxon>
        <taxon>Bos</taxon>
    </lineage>
</organism>
<gene>
    <name type="primary">CNN3</name>
</gene>
<sequence>MTHFNKGPSYGLSAEVKNKIASKYDHQAEEDLRNWIEEVTGMSIGANFQLGLKDGIILCELINKLQPGSVKKVNESSLNWPQLENIGNFIKAIQAYGMKPHDIFEANDLFENGNMTQVQTTLVALAGLAKTKGFHTTIDIGVKYAEKQTRRFDEGKLKAGQSVIGLQMGTNKCASQAGMTAYGTRRHLYDPKMQTDKPFDQTTISLQMGTNKGASQAGMLAPGTRRDIYDQKLTLQPVDNSTISLQMGTNKVASQKGMSVYGLGRQVYDPKYCAAPTEPVIHNGSQGTGTNGSEISDSDYQAEYPDEYHGEYQDDYPRDYQYGDQGIDY</sequence>
<keyword id="KW-0007">Acetylation</keyword>
<keyword id="KW-0009">Actin-binding</keyword>
<keyword id="KW-0112">Calmodulin-binding</keyword>
<keyword id="KW-0488">Methylation</keyword>
<keyword id="KW-1185">Reference proteome</keyword>
<keyword id="KW-0677">Repeat</keyword>
<comment type="function">
    <text evidence="1">Thin filament-associated protein that is implicated in the regulation and modulation of smooth muscle contraction. It is capable of binding to actin, calmodulin and tropomyosin. The interaction of calponin with actin inhibits the actomyosin Mg-ATPase activity (By similarity).</text>
</comment>
<comment type="similarity">
    <text evidence="6">Belongs to the calponin family.</text>
</comment>
<name>CNN3_BOVIN</name>
<protein>
    <recommendedName>
        <fullName>Calponin-3</fullName>
    </recommendedName>
    <alternativeName>
        <fullName>Calponin, acidic isoform</fullName>
    </alternativeName>
</protein>